<gene>
    <name evidence="1" type="primary">ogt</name>
    <name type="ordered locus">PF1878</name>
</gene>
<protein>
    <recommendedName>
        <fullName evidence="1">Methylated-DNA--protein-cysteine methyltransferase</fullName>
        <ecNumber evidence="1">2.1.1.63</ecNumber>
    </recommendedName>
    <alternativeName>
        <fullName evidence="1">6-O-methylguanine-DNA methyltransferase</fullName>
        <shortName evidence="1">MGMT</shortName>
    </alternativeName>
    <alternativeName>
        <fullName evidence="1">O-6-methylguanine-DNA-alkyltransferase</fullName>
    </alternativeName>
</protein>
<reference key="1">
    <citation type="journal article" date="1999" name="Genetics">
        <title>Divergence of the hyperthermophilic archaea Pyrococcus furiosus and P. horikoshii inferred from complete genomic sequences.</title>
        <authorList>
            <person name="Maeder D.L."/>
            <person name="Weiss R.B."/>
            <person name="Dunn D.M."/>
            <person name="Cherry J.L."/>
            <person name="Gonzalez J.M."/>
            <person name="DiRuggiero J."/>
            <person name="Robb F.T."/>
        </authorList>
    </citation>
    <scope>NUCLEOTIDE SEQUENCE [LARGE SCALE GENOMIC DNA]</scope>
    <source>
        <strain>ATCC 43587 / DSM 3638 / JCM 8422 / Vc1</strain>
    </source>
</reference>
<comment type="function">
    <text evidence="1">Involved in the cellular defense against the biological effects of O6-methylguanine (O6-MeG) and O4-methylthymine (O4-MeT) in DNA. Repairs the methylated nucleobase in DNA by stoichiometrically transferring the methyl group to a cysteine residue in the enzyme. This is a suicide reaction: the enzyme is irreversibly inactivated.</text>
</comment>
<comment type="catalytic activity">
    <reaction evidence="1">
        <text>a 6-O-methyl-2'-deoxyguanosine in DNA + L-cysteinyl-[protein] = S-methyl-L-cysteinyl-[protein] + a 2'-deoxyguanosine in DNA</text>
        <dbReference type="Rhea" id="RHEA:24000"/>
        <dbReference type="Rhea" id="RHEA-COMP:10131"/>
        <dbReference type="Rhea" id="RHEA-COMP:10132"/>
        <dbReference type="Rhea" id="RHEA-COMP:11367"/>
        <dbReference type="Rhea" id="RHEA-COMP:11368"/>
        <dbReference type="ChEBI" id="CHEBI:29950"/>
        <dbReference type="ChEBI" id="CHEBI:82612"/>
        <dbReference type="ChEBI" id="CHEBI:85445"/>
        <dbReference type="ChEBI" id="CHEBI:85448"/>
        <dbReference type="EC" id="2.1.1.63"/>
    </reaction>
</comment>
<comment type="catalytic activity">
    <reaction evidence="1">
        <text>a 4-O-methyl-thymidine in DNA + L-cysteinyl-[protein] = a thymidine in DNA + S-methyl-L-cysteinyl-[protein]</text>
        <dbReference type="Rhea" id="RHEA:53428"/>
        <dbReference type="Rhea" id="RHEA-COMP:10131"/>
        <dbReference type="Rhea" id="RHEA-COMP:10132"/>
        <dbReference type="Rhea" id="RHEA-COMP:13555"/>
        <dbReference type="Rhea" id="RHEA-COMP:13556"/>
        <dbReference type="ChEBI" id="CHEBI:29950"/>
        <dbReference type="ChEBI" id="CHEBI:82612"/>
        <dbReference type="ChEBI" id="CHEBI:137386"/>
        <dbReference type="ChEBI" id="CHEBI:137387"/>
        <dbReference type="EC" id="2.1.1.63"/>
    </reaction>
</comment>
<comment type="subcellular location">
    <subcellularLocation>
        <location evidence="1">Cytoplasm</location>
    </subcellularLocation>
</comment>
<comment type="miscellaneous">
    <text>This enzyme catalyzes only one turnover and therefore is not strictly catalytic. According to one definition, an enzyme is a biocatalyst that acts repeatedly and over many reaction cycles.</text>
</comment>
<comment type="similarity">
    <text evidence="1">Belongs to the MGMT family.</text>
</comment>
<name>OGT_PYRFU</name>
<organism>
    <name type="scientific">Pyrococcus furiosus (strain ATCC 43587 / DSM 3638 / JCM 8422 / Vc1)</name>
    <dbReference type="NCBI Taxonomy" id="186497"/>
    <lineage>
        <taxon>Archaea</taxon>
        <taxon>Methanobacteriati</taxon>
        <taxon>Methanobacteriota</taxon>
        <taxon>Thermococci</taxon>
        <taxon>Thermococcales</taxon>
        <taxon>Thermococcaceae</taxon>
        <taxon>Pyrococcus</taxon>
    </lineage>
</organism>
<accession>Q8TZV2</accession>
<sequence length="174" mass="20100">MILEVRKFQVKNKAVYIGTLSEDKIFGIIFSIDEPEVIRHRIPTLINFLEKRLNKKLEIKEGNSGFSDVVFKTLIGKISNEEAAEFIEVSYLTKFERKLYIYLVENVKRGEVITYGELAKILNTSSRAVGAAVKRNPYPIIVPCHRVIGRKNPYLYTPKPEYKKFLLEVEGWTS</sequence>
<keyword id="KW-0963">Cytoplasm</keyword>
<keyword id="KW-0227">DNA damage</keyword>
<keyword id="KW-0234">DNA repair</keyword>
<keyword id="KW-0489">Methyltransferase</keyword>
<keyword id="KW-1185">Reference proteome</keyword>
<keyword id="KW-0808">Transferase</keyword>
<evidence type="ECO:0000255" key="1">
    <source>
        <dbReference type="HAMAP-Rule" id="MF_00772"/>
    </source>
</evidence>
<feature type="chain" id="PRO_0000139383" description="Methylated-DNA--protein-cysteine methyltransferase">
    <location>
        <begin position="1"/>
        <end position="174"/>
    </location>
</feature>
<feature type="active site" description="Nucleophile; methyl group acceptor" evidence="1">
    <location>
        <position position="144"/>
    </location>
</feature>
<proteinExistence type="inferred from homology"/>
<dbReference type="EC" id="2.1.1.63" evidence="1"/>
<dbReference type="EMBL" id="AE009950">
    <property type="protein sequence ID" value="AAL82002.1"/>
    <property type="molecule type" value="Genomic_DNA"/>
</dbReference>
<dbReference type="RefSeq" id="WP_011013017.1">
    <property type="nucleotide sequence ID" value="NZ_CP023154.1"/>
</dbReference>
<dbReference type="SMR" id="Q8TZV2"/>
<dbReference type="STRING" id="186497.PF1878"/>
<dbReference type="PaxDb" id="186497-PF1878"/>
<dbReference type="KEGG" id="pfu:PF1878"/>
<dbReference type="PATRIC" id="fig|186497.12.peg.1949"/>
<dbReference type="eggNOG" id="arCOG02724">
    <property type="taxonomic scope" value="Archaea"/>
</dbReference>
<dbReference type="HOGENOM" id="CLU_000445_52_2_2"/>
<dbReference type="OrthoDB" id="372118at2157"/>
<dbReference type="PhylomeDB" id="Q8TZV2"/>
<dbReference type="Proteomes" id="UP000001013">
    <property type="component" value="Chromosome"/>
</dbReference>
<dbReference type="GO" id="GO:0005737">
    <property type="term" value="C:cytoplasm"/>
    <property type="evidence" value="ECO:0007669"/>
    <property type="project" value="UniProtKB-SubCell"/>
</dbReference>
<dbReference type="GO" id="GO:0003908">
    <property type="term" value="F:methylated-DNA-[protein]-cysteine S-methyltransferase activity"/>
    <property type="evidence" value="ECO:0007669"/>
    <property type="project" value="UniProtKB-UniRule"/>
</dbReference>
<dbReference type="GO" id="GO:0006307">
    <property type="term" value="P:DNA alkylation repair"/>
    <property type="evidence" value="ECO:0007669"/>
    <property type="project" value="UniProtKB-UniRule"/>
</dbReference>
<dbReference type="GO" id="GO:0032259">
    <property type="term" value="P:methylation"/>
    <property type="evidence" value="ECO:0007669"/>
    <property type="project" value="UniProtKB-KW"/>
</dbReference>
<dbReference type="CDD" id="cd06445">
    <property type="entry name" value="ATase"/>
    <property type="match status" value="1"/>
</dbReference>
<dbReference type="Gene3D" id="3.30.160.70">
    <property type="entry name" value="Methylated DNA-protein cysteine methyltransferase domain"/>
    <property type="match status" value="1"/>
</dbReference>
<dbReference type="Gene3D" id="1.10.10.10">
    <property type="entry name" value="Winged helix-like DNA-binding domain superfamily/Winged helix DNA-binding domain"/>
    <property type="match status" value="1"/>
</dbReference>
<dbReference type="HAMAP" id="MF_00772">
    <property type="entry name" value="OGT"/>
    <property type="match status" value="1"/>
</dbReference>
<dbReference type="InterPro" id="IPR001497">
    <property type="entry name" value="MethylDNA_cys_MeTrfase_AS"/>
</dbReference>
<dbReference type="InterPro" id="IPR014048">
    <property type="entry name" value="MethylDNA_cys_MeTrfase_DNA-bd"/>
</dbReference>
<dbReference type="InterPro" id="IPR036217">
    <property type="entry name" value="MethylDNA_cys_MeTrfase_DNAb"/>
</dbReference>
<dbReference type="InterPro" id="IPR023546">
    <property type="entry name" value="MGMT"/>
</dbReference>
<dbReference type="InterPro" id="IPR015236">
    <property type="entry name" value="MGMT_N"/>
</dbReference>
<dbReference type="InterPro" id="IPR036631">
    <property type="entry name" value="MGMT_N_sf"/>
</dbReference>
<dbReference type="InterPro" id="IPR036388">
    <property type="entry name" value="WH-like_DNA-bd_sf"/>
</dbReference>
<dbReference type="NCBIfam" id="TIGR00589">
    <property type="entry name" value="ogt"/>
    <property type="match status" value="1"/>
</dbReference>
<dbReference type="NCBIfam" id="NF003022">
    <property type="entry name" value="PRK03887.1"/>
    <property type="match status" value="1"/>
</dbReference>
<dbReference type="PANTHER" id="PTHR46460">
    <property type="entry name" value="METHYLATED-DNA--PROTEIN-CYSTEINE METHYLTRANSFERASE"/>
    <property type="match status" value="1"/>
</dbReference>
<dbReference type="PANTHER" id="PTHR46460:SF1">
    <property type="entry name" value="METHYLATED-DNA--PROTEIN-CYSTEINE METHYLTRANSFERASE"/>
    <property type="match status" value="1"/>
</dbReference>
<dbReference type="Pfam" id="PF01035">
    <property type="entry name" value="DNA_binding_1"/>
    <property type="match status" value="1"/>
</dbReference>
<dbReference type="Pfam" id="PF09153">
    <property type="entry name" value="MGMT_N"/>
    <property type="match status" value="1"/>
</dbReference>
<dbReference type="SUPFAM" id="SSF53155">
    <property type="entry name" value="Methylated DNA-protein cysteine methyltransferase domain"/>
    <property type="match status" value="1"/>
</dbReference>
<dbReference type="SUPFAM" id="SSF46767">
    <property type="entry name" value="Methylated DNA-protein cysteine methyltransferase, C-terminal domain"/>
    <property type="match status" value="1"/>
</dbReference>
<dbReference type="PROSITE" id="PS00374">
    <property type="entry name" value="MGMT"/>
    <property type="match status" value="1"/>
</dbReference>